<dbReference type="EC" id="2.3.2.27"/>
<dbReference type="EMBL" id="BC083842">
    <property type="protein sequence ID" value="AAH83842.1"/>
    <property type="molecule type" value="mRNA"/>
</dbReference>
<dbReference type="RefSeq" id="NP_001012087.1">
    <property type="nucleotide sequence ID" value="NM_001012087.1"/>
</dbReference>
<dbReference type="RefSeq" id="XP_017447174.1">
    <property type="nucleotide sequence ID" value="XM_017591685.1"/>
</dbReference>
<dbReference type="SMR" id="Q5XI50"/>
<dbReference type="FunCoup" id="Q5XI50">
    <property type="interactions" value="3351"/>
</dbReference>
<dbReference type="STRING" id="10116.ENSRNOP00000069062"/>
<dbReference type="iPTMnet" id="Q5XI50"/>
<dbReference type="PhosphoSitePlus" id="Q5XI50"/>
<dbReference type="PaxDb" id="10116-ENSRNOP00000008464"/>
<dbReference type="Ensembl" id="ENSRNOT00000109892.1">
    <property type="protein sequence ID" value="ENSRNOP00000092770.1"/>
    <property type="gene ID" value="ENSRNOG00000006241.8"/>
</dbReference>
<dbReference type="GeneID" id="311059"/>
<dbReference type="KEGG" id="rno:311059"/>
<dbReference type="UCSC" id="RGD:1308993">
    <property type="organism name" value="rat"/>
</dbReference>
<dbReference type="AGR" id="RGD:1308993"/>
<dbReference type="CTD" id="64844"/>
<dbReference type="RGD" id="1308993">
    <property type="gene designation" value="Marchf7"/>
</dbReference>
<dbReference type="eggNOG" id="KOG1609">
    <property type="taxonomic scope" value="Eukaryota"/>
</dbReference>
<dbReference type="GeneTree" id="ENSGT00530000063836"/>
<dbReference type="InParanoid" id="Q5XI50"/>
<dbReference type="PhylomeDB" id="Q5XI50"/>
<dbReference type="TreeFam" id="TF330816"/>
<dbReference type="UniPathway" id="UPA00143"/>
<dbReference type="PRO" id="PR:Q5XI50"/>
<dbReference type="Proteomes" id="UP000002494">
    <property type="component" value="Chromosome 3"/>
</dbReference>
<dbReference type="Bgee" id="ENSRNOG00000006241">
    <property type="expression patterns" value="Expressed in testis and 18 other cell types or tissues"/>
</dbReference>
<dbReference type="GO" id="GO:0005813">
    <property type="term" value="C:centrosome"/>
    <property type="evidence" value="ECO:0000266"/>
    <property type="project" value="RGD"/>
</dbReference>
<dbReference type="GO" id="GO:0005829">
    <property type="term" value="C:cytosol"/>
    <property type="evidence" value="ECO:0000250"/>
    <property type="project" value="UniProtKB"/>
</dbReference>
<dbReference type="GO" id="GO:0005634">
    <property type="term" value="C:nucleus"/>
    <property type="evidence" value="ECO:0000250"/>
    <property type="project" value="UniProtKB"/>
</dbReference>
<dbReference type="GO" id="GO:0005886">
    <property type="term" value="C:plasma membrane"/>
    <property type="evidence" value="ECO:0000250"/>
    <property type="project" value="UniProtKB"/>
</dbReference>
<dbReference type="GO" id="GO:0019899">
    <property type="term" value="F:enzyme binding"/>
    <property type="evidence" value="ECO:0000266"/>
    <property type="project" value="RGD"/>
</dbReference>
<dbReference type="GO" id="GO:0097371">
    <property type="term" value="F:MDM2/MDM4 family protein binding"/>
    <property type="evidence" value="ECO:0000266"/>
    <property type="project" value="RGD"/>
</dbReference>
<dbReference type="GO" id="GO:0043130">
    <property type="term" value="F:ubiquitin binding"/>
    <property type="evidence" value="ECO:0000250"/>
    <property type="project" value="UniProtKB"/>
</dbReference>
<dbReference type="GO" id="GO:0031624">
    <property type="term" value="F:ubiquitin conjugating enzyme binding"/>
    <property type="evidence" value="ECO:0000266"/>
    <property type="project" value="RGD"/>
</dbReference>
<dbReference type="GO" id="GO:0061630">
    <property type="term" value="F:ubiquitin protein ligase activity"/>
    <property type="evidence" value="ECO:0000266"/>
    <property type="project" value="RGD"/>
</dbReference>
<dbReference type="GO" id="GO:0008270">
    <property type="term" value="F:zinc ion binding"/>
    <property type="evidence" value="ECO:0007669"/>
    <property type="project" value="UniProtKB-KW"/>
</dbReference>
<dbReference type="GO" id="GO:1902018">
    <property type="term" value="P:negative regulation of cilium assembly"/>
    <property type="evidence" value="ECO:0000266"/>
    <property type="project" value="RGD"/>
</dbReference>
<dbReference type="GO" id="GO:0043518">
    <property type="term" value="P:negative regulation of DNA damage response, signal transduction by p53 class mediator"/>
    <property type="evidence" value="ECO:0000250"/>
    <property type="project" value="UniProtKB"/>
</dbReference>
<dbReference type="GO" id="GO:1902166">
    <property type="term" value="P:negative regulation of intrinsic apoptotic signaling pathway in response to DNA damage by p53 class mediator"/>
    <property type="evidence" value="ECO:0000250"/>
    <property type="project" value="UniProtKB"/>
</dbReference>
<dbReference type="GO" id="GO:1901799">
    <property type="term" value="P:negative regulation of proteasomal protein catabolic process"/>
    <property type="evidence" value="ECO:0000250"/>
    <property type="project" value="UniProtKB"/>
</dbReference>
<dbReference type="GO" id="GO:1905524">
    <property type="term" value="P:negative regulation of protein autoubiquitination"/>
    <property type="evidence" value="ECO:0000250"/>
    <property type="project" value="UniProtKB"/>
</dbReference>
<dbReference type="GO" id="GO:0042130">
    <property type="term" value="P:negative regulation of T cell proliferation"/>
    <property type="evidence" value="ECO:0000266"/>
    <property type="project" value="RGD"/>
</dbReference>
<dbReference type="GO" id="GO:0008284">
    <property type="term" value="P:positive regulation of cell population proliferation"/>
    <property type="evidence" value="ECO:0000250"/>
    <property type="project" value="UniProtKB"/>
</dbReference>
<dbReference type="GO" id="GO:1902916">
    <property type="term" value="P:positive regulation of protein polyubiquitination"/>
    <property type="evidence" value="ECO:0000250"/>
    <property type="project" value="UniProtKB"/>
</dbReference>
<dbReference type="GO" id="GO:0051865">
    <property type="term" value="P:protein autoubiquitination"/>
    <property type="evidence" value="ECO:0000250"/>
    <property type="project" value="UniProtKB"/>
</dbReference>
<dbReference type="GO" id="GO:0006513">
    <property type="term" value="P:protein monoubiquitination"/>
    <property type="evidence" value="ECO:0000266"/>
    <property type="project" value="RGD"/>
</dbReference>
<dbReference type="GO" id="GO:0050821">
    <property type="term" value="P:protein stabilization"/>
    <property type="evidence" value="ECO:0000250"/>
    <property type="project" value="UniProtKB"/>
</dbReference>
<dbReference type="GO" id="GO:0002643">
    <property type="term" value="P:regulation of tolerance induction"/>
    <property type="evidence" value="ECO:0000266"/>
    <property type="project" value="RGD"/>
</dbReference>
<dbReference type="CDD" id="cd16812">
    <property type="entry name" value="RING_CH-C4HC3_MARCH7"/>
    <property type="match status" value="1"/>
</dbReference>
<dbReference type="FunFam" id="3.30.40.10:FF:000108">
    <property type="entry name" value="E3 ubiquitin-protein ligase MARCH7 isoform X1"/>
    <property type="match status" value="1"/>
</dbReference>
<dbReference type="Gene3D" id="3.30.40.10">
    <property type="entry name" value="Zinc/RING finger domain, C3HC4 (zinc finger)"/>
    <property type="match status" value="1"/>
</dbReference>
<dbReference type="InterPro" id="IPR052297">
    <property type="entry name" value="RING-CH-type_E3_ubiq-ligase"/>
</dbReference>
<dbReference type="InterPro" id="IPR011016">
    <property type="entry name" value="Znf_RING-CH"/>
</dbReference>
<dbReference type="InterPro" id="IPR013083">
    <property type="entry name" value="Znf_RING/FYVE/PHD"/>
</dbReference>
<dbReference type="PANTHER" id="PTHR14471:SF1">
    <property type="entry name" value="E3 UBIQUITIN-PROTEIN LIGASE MARCHF7"/>
    <property type="match status" value="1"/>
</dbReference>
<dbReference type="PANTHER" id="PTHR14471">
    <property type="entry name" value="MARCH7/10 E3 UBIQUITIN PROTEIN LIGASE FAMILY MEMBER"/>
    <property type="match status" value="1"/>
</dbReference>
<dbReference type="Pfam" id="PF12906">
    <property type="entry name" value="RINGv"/>
    <property type="match status" value="1"/>
</dbReference>
<dbReference type="SMART" id="SM00744">
    <property type="entry name" value="RINGv"/>
    <property type="match status" value="1"/>
</dbReference>
<dbReference type="SUPFAM" id="SSF57850">
    <property type="entry name" value="RING/U-box"/>
    <property type="match status" value="1"/>
</dbReference>
<dbReference type="PROSITE" id="PS51292">
    <property type="entry name" value="ZF_RING_CH"/>
    <property type="match status" value="1"/>
</dbReference>
<organism>
    <name type="scientific">Rattus norvegicus</name>
    <name type="common">Rat</name>
    <dbReference type="NCBI Taxonomy" id="10116"/>
    <lineage>
        <taxon>Eukaryota</taxon>
        <taxon>Metazoa</taxon>
        <taxon>Chordata</taxon>
        <taxon>Craniata</taxon>
        <taxon>Vertebrata</taxon>
        <taxon>Euteleostomi</taxon>
        <taxon>Mammalia</taxon>
        <taxon>Eutheria</taxon>
        <taxon>Euarchontoglires</taxon>
        <taxon>Glires</taxon>
        <taxon>Rodentia</taxon>
        <taxon>Myomorpha</taxon>
        <taxon>Muroidea</taxon>
        <taxon>Muridae</taxon>
        <taxon>Murinae</taxon>
        <taxon>Rattus</taxon>
    </lineage>
</organism>
<feature type="chain" id="PRO_0000274418" description="E3 ubiquitin-protein ligase MARCHF7">
    <location>
        <begin position="1"/>
        <end position="692"/>
    </location>
</feature>
<feature type="zinc finger region" description="RING-CH-type" evidence="3">
    <location>
        <begin position="545"/>
        <end position="615"/>
    </location>
</feature>
<feature type="region of interest" description="Disordered" evidence="4">
    <location>
        <begin position="1"/>
        <end position="165"/>
    </location>
</feature>
<feature type="region of interest" description="Disordered" evidence="4">
    <location>
        <begin position="201"/>
        <end position="280"/>
    </location>
</feature>
<feature type="region of interest" description="Disordered" evidence="4">
    <location>
        <begin position="296"/>
        <end position="343"/>
    </location>
</feature>
<feature type="region of interest" description="Disordered" evidence="4">
    <location>
        <begin position="360"/>
        <end position="425"/>
    </location>
</feature>
<feature type="region of interest" description="Disordered" evidence="4">
    <location>
        <begin position="440"/>
        <end position="474"/>
    </location>
</feature>
<feature type="region of interest" description="Disordered" evidence="4">
    <location>
        <begin position="512"/>
        <end position="532"/>
    </location>
</feature>
<feature type="compositionally biased region" description="Basic and acidic residues" evidence="4">
    <location>
        <begin position="37"/>
        <end position="48"/>
    </location>
</feature>
<feature type="compositionally biased region" description="Polar residues" evidence="4">
    <location>
        <begin position="61"/>
        <end position="83"/>
    </location>
</feature>
<feature type="compositionally biased region" description="Polar residues" evidence="4">
    <location>
        <begin position="95"/>
        <end position="132"/>
    </location>
</feature>
<feature type="compositionally biased region" description="Basic and acidic residues" evidence="4">
    <location>
        <begin position="140"/>
        <end position="153"/>
    </location>
</feature>
<feature type="compositionally biased region" description="Polar residues" evidence="4">
    <location>
        <begin position="201"/>
        <end position="214"/>
    </location>
</feature>
<feature type="compositionally biased region" description="Low complexity" evidence="4">
    <location>
        <begin position="215"/>
        <end position="233"/>
    </location>
</feature>
<feature type="compositionally biased region" description="Polar residues" evidence="4">
    <location>
        <begin position="235"/>
        <end position="272"/>
    </location>
</feature>
<feature type="compositionally biased region" description="Low complexity" evidence="4">
    <location>
        <begin position="296"/>
        <end position="305"/>
    </location>
</feature>
<feature type="compositionally biased region" description="Polar residues" evidence="4">
    <location>
        <begin position="306"/>
        <end position="336"/>
    </location>
</feature>
<feature type="compositionally biased region" description="Low complexity" evidence="4">
    <location>
        <begin position="450"/>
        <end position="462"/>
    </location>
</feature>
<feature type="compositionally biased region" description="Basic and acidic residues" evidence="4">
    <location>
        <begin position="516"/>
        <end position="532"/>
    </location>
</feature>
<feature type="binding site" evidence="3">
    <location>
        <position position="553"/>
    </location>
    <ligand>
        <name>Zn(2+)</name>
        <dbReference type="ChEBI" id="CHEBI:29105"/>
        <label>1</label>
    </ligand>
</feature>
<feature type="binding site" evidence="3">
    <location>
        <position position="556"/>
    </location>
    <ligand>
        <name>Zn(2+)</name>
        <dbReference type="ChEBI" id="CHEBI:29105"/>
        <label>1</label>
    </ligand>
</feature>
<feature type="binding site" evidence="3">
    <location>
        <position position="571"/>
    </location>
    <ligand>
        <name>Zn(2+)</name>
        <dbReference type="ChEBI" id="CHEBI:29105"/>
        <label>2</label>
    </ligand>
</feature>
<feature type="binding site" evidence="3">
    <location>
        <position position="573"/>
    </location>
    <ligand>
        <name>Zn(2+)</name>
        <dbReference type="ChEBI" id="CHEBI:29105"/>
        <label>2</label>
    </ligand>
</feature>
<feature type="binding site" evidence="3">
    <location>
        <position position="581"/>
    </location>
    <ligand>
        <name>Zn(2+)</name>
        <dbReference type="ChEBI" id="CHEBI:29105"/>
        <label>1</label>
    </ligand>
</feature>
<feature type="binding site" evidence="3">
    <location>
        <position position="584"/>
    </location>
    <ligand>
        <name>Zn(2+)</name>
        <dbReference type="ChEBI" id="CHEBI:29105"/>
        <label>1</label>
    </ligand>
</feature>
<feature type="binding site" evidence="3">
    <location>
        <position position="605"/>
    </location>
    <ligand>
        <name>Zn(2+)</name>
        <dbReference type="ChEBI" id="CHEBI:29105"/>
        <label>2</label>
    </ligand>
</feature>
<feature type="binding site" evidence="3">
    <location>
        <position position="608"/>
    </location>
    <ligand>
        <name>Zn(2+)</name>
        <dbReference type="ChEBI" id="CHEBI:29105"/>
        <label>2</label>
    </ligand>
</feature>
<feature type="modified residue" description="N-acetylmethionine" evidence="1">
    <location>
        <position position="1"/>
    </location>
</feature>
<feature type="modified residue" description="Phosphoserine" evidence="1">
    <location>
        <position position="318"/>
    </location>
</feature>
<feature type="modified residue" description="Phosphoserine" evidence="1">
    <location>
        <position position="389"/>
    </location>
</feature>
<feature type="modified residue" description="Phosphothreonine" evidence="1">
    <location>
        <position position="687"/>
    </location>
</feature>
<feature type="modified residue" description="Phosphoserine" evidence="1">
    <location>
        <position position="688"/>
    </location>
</feature>
<protein>
    <recommendedName>
        <fullName>E3 ubiquitin-protein ligase MARCHF7</fullName>
        <ecNumber>2.3.2.27</ecNumber>
    </recommendedName>
    <alternativeName>
        <fullName>Membrane-associated RING finger protein 7</fullName>
    </alternativeName>
    <alternativeName>
        <fullName>Membrane-associated RING-CH protein VII</fullName>
        <shortName>MARCH-VII</shortName>
    </alternativeName>
    <alternativeName>
        <fullName evidence="5">RING-type E3 ubiquitin transferase MARCHF7</fullName>
    </alternativeName>
</protein>
<accession>Q5XI50</accession>
<evidence type="ECO:0000250" key="1">
    <source>
        <dbReference type="UniProtKB" id="Q9H992"/>
    </source>
</evidence>
<evidence type="ECO:0000250" key="2">
    <source>
        <dbReference type="UniProtKB" id="Q9WV66"/>
    </source>
</evidence>
<evidence type="ECO:0000255" key="3">
    <source>
        <dbReference type="PROSITE-ProRule" id="PRU00623"/>
    </source>
</evidence>
<evidence type="ECO:0000256" key="4">
    <source>
        <dbReference type="SAM" id="MobiDB-lite"/>
    </source>
</evidence>
<evidence type="ECO:0000305" key="5"/>
<comment type="function">
    <text evidence="1 2">E3 ubiquitin-protein ligase which may specifically enhance the E2 activity of HIP2. E3 ubiquitin ligases accept ubiquitin from an E2 ubiquitin-conjugating enzyme in the form of a thioester and then directly transfer the ubiquitin to targeted substrates (By similarity). May be involved in T-cell proliferation by regulating LIF secretion (By similarity). May play a role in lysosome homeostasis. Promotes 'Lys-6', 'Lys-11' and 'Lys-63'-linked mixed polyubiquitination on ATG14 leading to the inhibition of autophagy by impairing the interaction between ATG14 and STX7. Participates in the dopamine-mediated negative regulation of the NLRP3 inflammasome by promoting its uibiquitination and subsequent degradation (By similarity).</text>
</comment>
<comment type="catalytic activity">
    <reaction evidence="1">
        <text>S-ubiquitinyl-[E2 ubiquitin-conjugating enzyme]-L-cysteine + [acceptor protein]-L-lysine = [E2 ubiquitin-conjugating enzyme]-L-cysteine + N(6)-ubiquitinyl-[acceptor protein]-L-lysine.</text>
        <dbReference type="EC" id="2.3.2.27"/>
    </reaction>
</comment>
<comment type="pathway">
    <text>Protein modification; protein ubiquitination.</text>
</comment>
<comment type="subcellular location">
    <subcellularLocation>
        <location evidence="1">Cytoplasm</location>
    </subcellularLocation>
</comment>
<comment type="domain">
    <text evidence="3">The RING-CH-type zinc finger domain is required for E3 ligase activity.</text>
</comment>
<gene>
    <name type="primary">Marchf7</name>
    <name type="synonym">March7</name>
</gene>
<sequence>MESKPSRIPRRISVQPSGSLSARMVSGNRGTSLNDSYHSRDSSFRLDSEYQSASASASASPYQSTWYSESEITQGARSRSQNQQRDHDSKRPKLSCTNCTSTSAGRNIGSGLNTLSDSSWRPGQVPRSSSMVLGSFGTDLMRERRDLERRRDSSISSLMDYSHRSGDFTAPAYVQERVPSSYSQGARPKENAANTLQLNSSTNHQLPSEHQTVPSSRDSSRSSFRSHFSPRQSESFRNSSHPAFSYLSSRNETPTISSSERAGSSQRPFQESSDNEGRRTTRRLLSRIASSMSSTFFSRRSSQDSLNTRSLSSENYISPRTLTSQSRNNGASSSEVNDGRASEASQGFRFLRRRWGLSSLSQNHSSEPDAENFNQESEGRNTGPWLSSSLRNRCTPLFSRRRREGRDESSRISPSDVPPRSHLFRRESNEVVHLEAQGDSLGAAASRPQASGASGNASASGSTPDLPQGGRNTGIAGILPGSLFRFAVPPALGSNLTDNVTITVDIIPSGWSSADGKSEKAKSAPSRDPEKLQKIKESLLLEDSDEEEEGDLCRICQMAAASSSNLLIEPCKCTGSLQYVHQECMKKWLQAKINSGSSLEAVTTCELCKEKLQLNLEDFDIHELHRAHANEQAEYEFISSGLYLVVLLHLCEQSFSDMMGNTIEPSTRVRFINLARTLQAHMEDLETSEDEF</sequence>
<keyword id="KW-0007">Acetylation</keyword>
<keyword id="KW-0963">Cytoplasm</keyword>
<keyword id="KW-0479">Metal-binding</keyword>
<keyword id="KW-0597">Phosphoprotein</keyword>
<keyword id="KW-1185">Reference proteome</keyword>
<keyword id="KW-0808">Transferase</keyword>
<keyword id="KW-0833">Ubl conjugation pathway</keyword>
<keyword id="KW-0862">Zinc</keyword>
<keyword id="KW-0863">Zinc-finger</keyword>
<name>MARH7_RAT</name>
<proteinExistence type="evidence at transcript level"/>
<reference key="1">
    <citation type="journal article" date="2004" name="Genome Res.">
        <title>The status, quality, and expansion of the NIH full-length cDNA project: the Mammalian Gene Collection (MGC).</title>
        <authorList>
            <consortium name="The MGC Project Team"/>
        </authorList>
    </citation>
    <scope>NUCLEOTIDE SEQUENCE [LARGE SCALE MRNA]</scope>
    <source>
        <tissue>Testis</tissue>
    </source>
</reference>